<keyword id="KW-1064">Adaptive immunity</keyword>
<keyword id="KW-1015">Disulfide bond</keyword>
<keyword id="KW-0325">Glycoprotein</keyword>
<keyword id="KW-0391">Immunity</keyword>
<keyword id="KW-0472">Membrane</keyword>
<keyword id="KW-0491">MHC II</keyword>
<keyword id="KW-1185">Reference proteome</keyword>
<keyword id="KW-0732">Signal</keyword>
<keyword id="KW-0812">Transmembrane</keyword>
<keyword id="KW-1133">Transmembrane helix</keyword>
<proteinExistence type="evidence at transcript level"/>
<comment type="subcellular location">
    <subcellularLocation>
        <location evidence="3">Membrane</location>
        <topology evidence="3">Single-pass type I membrane protein</topology>
    </subcellularLocation>
</comment>
<comment type="similarity">
    <text evidence="3">Belongs to the MHC class II family.</text>
</comment>
<name>HB2D_CANLF</name>
<evidence type="ECO:0000255" key="1"/>
<evidence type="ECO:0000255" key="2">
    <source>
        <dbReference type="PROSITE-ProRule" id="PRU00114"/>
    </source>
</evidence>
<evidence type="ECO:0000305" key="3"/>
<sequence length="266" mass="30151">MVCLCFLGGSWMTALMLILMVLNPPFAWARDTPPHFLEVAKSECYFTNGTERVRFVERYIHNREEFVRFDSDVGEFRAVTELGRPVAESWNGQKEILEQERATVDTYCRHNYGVIESFTVQRRVEPTVTVYPTKTQTLQHHNLLVCSVNGFYPGHIEVRWLRNGQEEEAGVVSTGLIRNGDWTFQILVMLEIVPQSGEVYTCQVEHPSLTSPVTVEWRAQSDSAQSKMLSGIGGFVLGLLFLAVGLFIYFRNQKGHSGLQPTGLLS</sequence>
<reference key="1">
    <citation type="journal article" date="1990" name="Immunogenetics">
        <title>Nucleotide sequence of a dog DRB cDNA clone.</title>
        <authorList>
            <person name="Sarmiento U.M."/>
            <person name="Storb R."/>
        </authorList>
    </citation>
    <scope>NUCLEOTIDE SEQUENCE [MRNA]</scope>
</reference>
<protein>
    <recommendedName>
        <fullName>DLA class II histocompatibility antigen, DR-1 beta chain</fullName>
    </recommendedName>
</protein>
<organism>
    <name type="scientific">Canis lupus familiaris</name>
    <name type="common">Dog</name>
    <name type="synonym">Canis familiaris</name>
    <dbReference type="NCBI Taxonomy" id="9615"/>
    <lineage>
        <taxon>Eukaryota</taxon>
        <taxon>Metazoa</taxon>
        <taxon>Chordata</taxon>
        <taxon>Craniata</taxon>
        <taxon>Vertebrata</taxon>
        <taxon>Euteleostomi</taxon>
        <taxon>Mammalia</taxon>
        <taxon>Eutheria</taxon>
        <taxon>Laurasiatheria</taxon>
        <taxon>Carnivora</taxon>
        <taxon>Caniformia</taxon>
        <taxon>Canidae</taxon>
        <taxon>Canis</taxon>
    </lineage>
</organism>
<accession>P18470</accession>
<dbReference type="EMBL" id="M29611">
    <property type="protein sequence ID" value="AAA30874.1"/>
    <property type="molecule type" value="mRNA"/>
</dbReference>
<dbReference type="PIR" id="A45844">
    <property type="entry name" value="A45844"/>
</dbReference>
<dbReference type="RefSeq" id="NP_001014768.1">
    <property type="nucleotide sequence ID" value="NM_001014768.1"/>
</dbReference>
<dbReference type="SMR" id="P18470"/>
<dbReference type="FunCoup" id="P18470">
    <property type="interactions" value="175"/>
</dbReference>
<dbReference type="PaxDb" id="9612-ENSCAFP00000001156"/>
<dbReference type="GeneID" id="474860"/>
<dbReference type="KEGG" id="cfa:474860"/>
<dbReference type="CTD" id="474860"/>
<dbReference type="eggNOG" id="ENOG502RYBQ">
    <property type="taxonomic scope" value="Eukaryota"/>
</dbReference>
<dbReference type="InParanoid" id="P18470"/>
<dbReference type="OrthoDB" id="18430at33554"/>
<dbReference type="Proteomes" id="UP000002254">
    <property type="component" value="Unplaced"/>
</dbReference>
<dbReference type="Proteomes" id="UP000694429">
    <property type="component" value="Unplaced"/>
</dbReference>
<dbReference type="Proteomes" id="UP000694542">
    <property type="component" value="Unplaced"/>
</dbReference>
<dbReference type="Proteomes" id="UP000805418">
    <property type="component" value="Unplaced"/>
</dbReference>
<dbReference type="GO" id="GO:0031902">
    <property type="term" value="C:late endosome membrane"/>
    <property type="evidence" value="ECO:0000318"/>
    <property type="project" value="GO_Central"/>
</dbReference>
<dbReference type="GO" id="GO:0005765">
    <property type="term" value="C:lysosomal membrane"/>
    <property type="evidence" value="ECO:0000318"/>
    <property type="project" value="GO_Central"/>
</dbReference>
<dbReference type="GO" id="GO:0042613">
    <property type="term" value="C:MHC class II protein complex"/>
    <property type="evidence" value="ECO:0000318"/>
    <property type="project" value="GO_Central"/>
</dbReference>
<dbReference type="GO" id="GO:0023026">
    <property type="term" value="F:MHC class II protein complex binding"/>
    <property type="evidence" value="ECO:0000318"/>
    <property type="project" value="GO_Central"/>
</dbReference>
<dbReference type="GO" id="GO:0042605">
    <property type="term" value="F:peptide antigen binding"/>
    <property type="evidence" value="ECO:0000318"/>
    <property type="project" value="GO_Central"/>
</dbReference>
<dbReference type="GO" id="GO:0002250">
    <property type="term" value="P:adaptive immune response"/>
    <property type="evidence" value="ECO:0007669"/>
    <property type="project" value="UniProtKB-KW"/>
</dbReference>
<dbReference type="GO" id="GO:0019886">
    <property type="term" value="P:antigen processing and presentation of exogenous peptide antigen via MHC class II"/>
    <property type="evidence" value="ECO:0000318"/>
    <property type="project" value="GO_Central"/>
</dbReference>
<dbReference type="GO" id="GO:0002503">
    <property type="term" value="P:peptide antigen assembly with MHC class II protein complex"/>
    <property type="evidence" value="ECO:0000318"/>
    <property type="project" value="GO_Central"/>
</dbReference>
<dbReference type="GO" id="GO:0050778">
    <property type="term" value="P:positive regulation of immune response"/>
    <property type="evidence" value="ECO:0000318"/>
    <property type="project" value="GO_Central"/>
</dbReference>
<dbReference type="GO" id="GO:0050870">
    <property type="term" value="P:positive regulation of T cell activation"/>
    <property type="evidence" value="ECO:0000318"/>
    <property type="project" value="GO_Central"/>
</dbReference>
<dbReference type="CDD" id="cd21000">
    <property type="entry name" value="IgC1_MHC_II_beta_HLA-DR"/>
    <property type="match status" value="1"/>
</dbReference>
<dbReference type="FunFam" id="2.60.40.10:FF:000116">
    <property type="entry name" value="HLA class II histocompatibility antigen, DRB1-1 beta chain"/>
    <property type="match status" value="1"/>
</dbReference>
<dbReference type="FunFam" id="3.10.320.10:FF:000001">
    <property type="entry name" value="HLA class II histocompatibility antigen, DRB1-1 beta chain"/>
    <property type="match status" value="1"/>
</dbReference>
<dbReference type="Gene3D" id="3.10.320.10">
    <property type="entry name" value="Class II Histocompatibility Antigen, M Beta Chain, Chain B, domain 1"/>
    <property type="match status" value="1"/>
</dbReference>
<dbReference type="Gene3D" id="2.60.40.10">
    <property type="entry name" value="Immunoglobulins"/>
    <property type="match status" value="1"/>
</dbReference>
<dbReference type="InterPro" id="IPR007110">
    <property type="entry name" value="Ig-like_dom"/>
</dbReference>
<dbReference type="InterPro" id="IPR036179">
    <property type="entry name" value="Ig-like_dom_sf"/>
</dbReference>
<dbReference type="InterPro" id="IPR013783">
    <property type="entry name" value="Ig-like_fold"/>
</dbReference>
<dbReference type="InterPro" id="IPR003006">
    <property type="entry name" value="Ig/MHC_CS"/>
</dbReference>
<dbReference type="InterPro" id="IPR003597">
    <property type="entry name" value="Ig_C1-set"/>
</dbReference>
<dbReference type="InterPro" id="IPR050160">
    <property type="entry name" value="MHC/Immunoglobulin"/>
</dbReference>
<dbReference type="InterPro" id="IPR011162">
    <property type="entry name" value="MHC_I/II-like_Ag-recog"/>
</dbReference>
<dbReference type="InterPro" id="IPR014745">
    <property type="entry name" value="MHC_II_a/b_N"/>
</dbReference>
<dbReference type="InterPro" id="IPR000353">
    <property type="entry name" value="MHC_II_b_N"/>
</dbReference>
<dbReference type="PANTHER" id="PTHR19944:SF99">
    <property type="entry name" value="HLA CLASS II HISTOCOMPATIBILITY ANTIGEN, DRB1 BETA CHAIN"/>
    <property type="match status" value="1"/>
</dbReference>
<dbReference type="PANTHER" id="PTHR19944">
    <property type="entry name" value="MHC CLASS II-RELATED"/>
    <property type="match status" value="1"/>
</dbReference>
<dbReference type="Pfam" id="PF07654">
    <property type="entry name" value="C1-set"/>
    <property type="match status" value="1"/>
</dbReference>
<dbReference type="Pfam" id="PF00969">
    <property type="entry name" value="MHC_II_beta"/>
    <property type="match status" value="1"/>
</dbReference>
<dbReference type="SMART" id="SM00407">
    <property type="entry name" value="IGc1"/>
    <property type="match status" value="1"/>
</dbReference>
<dbReference type="SMART" id="SM00921">
    <property type="entry name" value="MHC_II_beta"/>
    <property type="match status" value="1"/>
</dbReference>
<dbReference type="SUPFAM" id="SSF48726">
    <property type="entry name" value="Immunoglobulin"/>
    <property type="match status" value="1"/>
</dbReference>
<dbReference type="SUPFAM" id="SSF54452">
    <property type="entry name" value="MHC antigen-recognition domain"/>
    <property type="match status" value="1"/>
</dbReference>
<dbReference type="PROSITE" id="PS50835">
    <property type="entry name" value="IG_LIKE"/>
    <property type="match status" value="1"/>
</dbReference>
<dbReference type="PROSITE" id="PS00290">
    <property type="entry name" value="IG_MHC"/>
    <property type="match status" value="1"/>
</dbReference>
<feature type="signal peptide">
    <location>
        <begin position="1"/>
        <end position="29"/>
    </location>
</feature>
<feature type="chain" id="PRO_0000019010" description="DLA class II histocompatibility antigen, DR-1 beta chain">
    <location>
        <begin position="30"/>
        <end position="266"/>
    </location>
</feature>
<feature type="topological domain" description="Extracellular" evidence="1">
    <location>
        <begin position="30"/>
        <end position="227"/>
    </location>
</feature>
<feature type="transmembrane region" description="Helical" evidence="1">
    <location>
        <begin position="228"/>
        <end position="250"/>
    </location>
</feature>
<feature type="topological domain" description="Cytoplasmic" evidence="1">
    <location>
        <begin position="251"/>
        <end position="266"/>
    </location>
</feature>
<feature type="domain" description="Ig-like C1-type">
    <location>
        <begin position="126"/>
        <end position="214"/>
    </location>
</feature>
<feature type="region of interest" description="Beta-1">
    <location>
        <begin position="30"/>
        <end position="124"/>
    </location>
</feature>
<feature type="region of interest" description="Beta-2">
    <location>
        <begin position="125"/>
        <end position="227"/>
    </location>
</feature>
<feature type="glycosylation site" description="N-linked (GlcNAc...) asparagine" evidence="1">
    <location>
        <position position="48"/>
    </location>
</feature>
<feature type="disulfide bond" evidence="2">
    <location>
        <begin position="44"/>
        <end position="108"/>
    </location>
</feature>
<feature type="disulfide bond" evidence="2">
    <location>
        <begin position="146"/>
        <end position="202"/>
    </location>
</feature>